<dbReference type="EMBL" id="AY665713">
    <property type="protein sequence ID" value="AAT67309.1"/>
    <property type="molecule type" value="Genomic_DNA"/>
</dbReference>
<dbReference type="PIR" id="G36800">
    <property type="entry name" value="WZBEE4"/>
</dbReference>
<dbReference type="SMR" id="P28948"/>
<dbReference type="KEGG" id="vg:2948556"/>
<dbReference type="Proteomes" id="UP000001189">
    <property type="component" value="Segment"/>
</dbReference>
<dbReference type="GO" id="GO:0044175">
    <property type="term" value="C:host cell endosome membrane"/>
    <property type="evidence" value="ECO:0007669"/>
    <property type="project" value="UniProtKB-SubCell"/>
</dbReference>
<dbReference type="GO" id="GO:0044177">
    <property type="term" value="C:host cell Golgi apparatus"/>
    <property type="evidence" value="ECO:0007669"/>
    <property type="project" value="UniProtKB-SubCell"/>
</dbReference>
<dbReference type="GO" id="GO:0044201">
    <property type="term" value="C:host cell nuclear inner membrane"/>
    <property type="evidence" value="ECO:0007669"/>
    <property type="project" value="UniProtKB-SubCell"/>
</dbReference>
<dbReference type="GO" id="GO:0016020">
    <property type="term" value="C:membrane"/>
    <property type="evidence" value="ECO:0007669"/>
    <property type="project" value="UniProtKB-KW"/>
</dbReference>
<dbReference type="GO" id="GO:0019031">
    <property type="term" value="C:viral envelope"/>
    <property type="evidence" value="ECO:0007669"/>
    <property type="project" value="UniProtKB-KW"/>
</dbReference>
<dbReference type="GO" id="GO:0055036">
    <property type="term" value="C:virion membrane"/>
    <property type="evidence" value="ECO:0007669"/>
    <property type="project" value="UniProtKB-SubCell"/>
</dbReference>
<dbReference type="HAMAP" id="MF_04035">
    <property type="entry name" value="HSV_GM"/>
    <property type="match status" value="1"/>
</dbReference>
<dbReference type="InterPro" id="IPR000785">
    <property type="entry name" value="Herpes_glycop_M"/>
</dbReference>
<dbReference type="Pfam" id="PF01528">
    <property type="entry name" value="Herpes_glycop"/>
    <property type="match status" value="1"/>
</dbReference>
<dbReference type="PRINTS" id="PR00333">
    <property type="entry name" value="HSVINTEGRLMP"/>
</dbReference>
<comment type="function">
    <text evidence="1 2">Envelope glycoprotein important for virion assembly and egress. Plays a role in the correct incorporation of gH-gL into virion membrane. Directs the glycoprotein N (gN) to the host trans-Golgi network.</text>
</comment>
<comment type="subunit">
    <text evidence="1">Interacts (via N-terminus) with gN (via N-terminus). The gM-gN heterodimer forms the gCII complex.</text>
</comment>
<comment type="subcellular location">
    <subcellularLocation>
        <location evidence="1">Virion membrane</location>
        <topology evidence="1">Multi-pass membrane protein</topology>
    </subcellularLocation>
    <subcellularLocation>
        <location evidence="1">Host Golgi apparatus</location>
        <location evidence="1">Host trans-Golgi network</location>
    </subcellularLocation>
    <subcellularLocation>
        <location evidence="1">Host endosome membrane</location>
        <topology evidence="1">Multi-pass membrane protein</topology>
    </subcellularLocation>
    <subcellularLocation>
        <location evidence="1">Host nucleus inner membrane</location>
        <topology evidence="1">Multi-pass membrane protein</topology>
    </subcellularLocation>
    <text evidence="1">During virion morphogenesis, this protein accumulates in the trans-Golgi network where secondary envelopment occurs.</text>
</comment>
<comment type="similarity">
    <text evidence="1">Belongs to the herpesviridae glycoprotein M family.</text>
</comment>
<name>GM_EHV1B</name>
<sequence length="450" mass="49221">MARRGAAVAEEPLLPSSGIVGIGPIEGINWRTWLVQVFCFALTTSVLFITLVTASLPQTGYPCFYGSLVDYTQKNHSVVDGVWMRQIAGGVAPTLFLETTSLVAFLYYTTLVLVAISFYLIISAVLVRRYARGKECTAVAGCTRPTTTLIASHVTLVLGTLATWLLQVVILLLSHKQAVLGAAVYVVHFVSLVFFCMSFSGLGTASAQYSSNLRILKTNLPALHKMAGPGRAVMTNLGMGMLGISLPILSLMLGIILANSFHITLWQTVTVAVGVFVALGLMFLIIVELIVSHYVHVLVGPALAVLVASSTLAVATHSYFVHFHAMVSVQAPNLATASKAIVGIMAVISIIMLVVRLVRAIMFHKKRNTEFYGRVKTVSSKARRYANKVRGPRRNPQPLNVAESRGMLLAEDSETDAEEPIYDVVSEEFETEYYDDPQRVPERSHRREYR</sequence>
<proteinExistence type="evidence at protein level"/>
<feature type="chain" id="PRO_0000115777" description="Envelope glycoprotein M">
    <location>
        <begin position="1"/>
        <end position="450"/>
    </location>
</feature>
<feature type="topological domain" description="Intravirion" evidence="1">
    <location>
        <begin position="1"/>
        <end position="31"/>
    </location>
</feature>
<feature type="transmembrane region" description="Helical" evidence="1">
    <location>
        <begin position="32"/>
        <end position="52"/>
    </location>
</feature>
<feature type="topological domain" description="Virion surface" evidence="1">
    <location>
        <begin position="53"/>
        <end position="101"/>
    </location>
</feature>
<feature type="transmembrane region" description="Helical" evidence="1">
    <location>
        <begin position="102"/>
        <end position="122"/>
    </location>
</feature>
<feature type="topological domain" description="Intravirion" evidence="1">
    <location>
        <begin position="123"/>
        <end position="153"/>
    </location>
</feature>
<feature type="transmembrane region" description="Helical" evidence="1">
    <location>
        <begin position="154"/>
        <end position="174"/>
    </location>
</feature>
<feature type="topological domain" description="Virion surface" evidence="1">
    <location>
        <begin position="175"/>
        <end position="178"/>
    </location>
</feature>
<feature type="transmembrane region" description="Helical" evidence="1">
    <location>
        <begin position="179"/>
        <end position="199"/>
    </location>
</feature>
<feature type="topological domain" description="Intravirion" evidence="1">
    <location>
        <begin position="200"/>
        <end position="236"/>
    </location>
</feature>
<feature type="transmembrane region" description="Helical" evidence="1">
    <location>
        <begin position="237"/>
        <end position="257"/>
    </location>
</feature>
<feature type="topological domain" description="Virion surface" evidence="1">
    <location>
        <begin position="258"/>
        <end position="270"/>
    </location>
</feature>
<feature type="transmembrane region" description="Helical" evidence="1">
    <location>
        <begin position="271"/>
        <end position="291"/>
    </location>
</feature>
<feature type="topological domain" description="Intravirion" evidence="1">
    <location>
        <begin position="292"/>
        <end position="294"/>
    </location>
</feature>
<feature type="transmembrane region" description="Helical" evidence="1">
    <location>
        <begin position="295"/>
        <end position="315"/>
    </location>
</feature>
<feature type="topological domain" description="Virion surface" evidence="1">
    <location>
        <begin position="316"/>
        <end position="334"/>
    </location>
</feature>
<feature type="transmembrane region" description="Helical" evidence="1">
    <location>
        <begin position="335"/>
        <end position="355"/>
    </location>
</feature>
<feature type="topological domain" description="Intravirion" evidence="1">
    <location>
        <begin position="356"/>
        <end position="450"/>
    </location>
</feature>
<feature type="disulfide bond" description="Interchain (with gN)" evidence="1">
    <location>
        <position position="63"/>
    </location>
</feature>
<organismHost>
    <name type="scientific">Equus caballus</name>
    <name type="common">Horse</name>
    <dbReference type="NCBI Taxonomy" id="9796"/>
</organismHost>
<organism>
    <name type="scientific">Equine herpesvirus 1 (strain Ab4p)</name>
    <name type="common">EHV-1</name>
    <name type="synonym">Equine abortion virus</name>
    <dbReference type="NCBI Taxonomy" id="31520"/>
    <lineage>
        <taxon>Viruses</taxon>
        <taxon>Duplodnaviria</taxon>
        <taxon>Heunggongvirae</taxon>
        <taxon>Peploviricota</taxon>
        <taxon>Herviviricetes</taxon>
        <taxon>Herpesvirales</taxon>
        <taxon>Orthoherpesviridae</taxon>
        <taxon>Alphaherpesvirinae</taxon>
        <taxon>Varicellovirus</taxon>
        <taxon>Varicellovirus equidalpha1</taxon>
        <taxon>Equid alphaherpesvirus 1</taxon>
    </lineage>
</organism>
<evidence type="ECO:0000255" key="1">
    <source>
        <dbReference type="HAMAP-Rule" id="MF_04035"/>
    </source>
</evidence>
<evidence type="ECO:0000269" key="2">
    <source>
    </source>
</evidence>
<reference key="1">
    <citation type="journal article" date="1992" name="Virology">
        <title>The DNA sequence of equine herpesvirus-1.</title>
        <authorList>
            <person name="Telford E.A.R."/>
            <person name="Watson M.S."/>
            <person name="McBride K."/>
            <person name="Davison A.J."/>
        </authorList>
    </citation>
    <scope>NUCLEOTIDE SEQUENCE [LARGE SCALE GENOMIC DNA]</scope>
</reference>
<reference key="2">
    <citation type="journal article" date="1996" name="J. Virol.">
        <title>The equine herpesvirus 1 glycoprotein gp21/22a, the herpes simplex virus type 1 gM homolog, is involved in virus penetration and cell-to-cell spread of virions.</title>
        <authorList>
            <person name="Osterrieder N."/>
            <person name="Neubauer A."/>
            <person name="Brandmueller C."/>
            <person name="Braun B."/>
            <person name="Kaaden O.-R."/>
            <person name="Baines J.D."/>
        </authorList>
    </citation>
    <scope>FUNCTION</scope>
    <source>
        <strain>RacL11</strain>
    </source>
</reference>
<reference key="3">
    <citation type="journal article" date="2002" name="J. Virol.">
        <title>The gene 10 (UL49.5) product of equine herpesvirus 1 is necessary and sufficient for functional processing of glycoprotein M.</title>
        <authorList>
            <person name="Rudolph J."/>
            <person name="Seyboldt C."/>
            <person name="Granzow H."/>
            <person name="Osterrieder N."/>
        </authorList>
    </citation>
    <scope>SUBUNIT</scope>
    <scope>SUBCELLULAR LOCATION</scope>
</reference>
<keyword id="KW-1015">Disulfide bond</keyword>
<keyword id="KW-0325">Glycoprotein</keyword>
<keyword id="KW-1039">Host endosome</keyword>
<keyword id="KW-1040">Host Golgi apparatus</keyword>
<keyword id="KW-1043">Host membrane</keyword>
<keyword id="KW-1048">Host nucleus</keyword>
<keyword id="KW-0472">Membrane</keyword>
<keyword id="KW-1185">Reference proteome</keyword>
<keyword id="KW-0812">Transmembrane</keyword>
<keyword id="KW-1133">Transmembrane helix</keyword>
<keyword id="KW-0261">Viral envelope protein</keyword>
<keyword id="KW-0946">Virion</keyword>
<protein>
    <recommendedName>
        <fullName evidence="1">Envelope glycoprotein M</fullName>
        <shortName evidence="1">gM</shortName>
    </recommendedName>
</protein>
<accession>P28948</accession>
<accession>Q6DLF9</accession>
<gene>
    <name evidence="1" type="primary">gM</name>
    <name type="ordered locus">52</name>
</gene>